<keyword id="KW-0053">Apoptosis</keyword>
<keyword id="KW-1003">Cell membrane</keyword>
<keyword id="KW-0963">Cytoplasm</keyword>
<keyword id="KW-0472">Membrane</keyword>
<keyword id="KW-0653">Protein transport</keyword>
<keyword id="KW-1185">Reference proteome</keyword>
<keyword id="KW-0813">Transport</keyword>
<gene>
    <name type="primary">aktip</name>
    <name type="synonym">fts</name>
</gene>
<accession>B5X1G6</accession>
<evidence type="ECO:0000250" key="1"/>
<evidence type="ECO:0000255" key="2">
    <source>
        <dbReference type="PROSITE-ProRule" id="PRU00388"/>
    </source>
</evidence>
<evidence type="ECO:0000256" key="3">
    <source>
        <dbReference type="SAM" id="MobiDB-lite"/>
    </source>
</evidence>
<evidence type="ECO:0000305" key="4"/>
<sequence>MNLNPFWSMSTNTGRKRSDGEEQSGEQQQQQRASPARPSFGKKQLPSIPKNALPITKPASPAATAQLANGTHASYGPFYLEYSLLAEFTLVIKQKLPGIYVQPSYKSALMWFGVIFIRHGLYQDGVFKFTVYIPDNYPDGECPRVVFDIPVFHPLVDPVSGELDVRRAFTKWRRNHNHIWQVLMYARTVFYKINTMEPLNPEAAVLYDKDVQLFKSKVVDSVKLCNSHLFDQPKMDDPYAISFSSWNPAIHDDAKERMFTHKRRPEDHHKGLQVSGLSWVKPGSTQPFSKDDNPPQN</sequence>
<reference key="1">
    <citation type="journal article" date="2010" name="BMC Genomics">
        <title>Salmo salar and Esox lucius full-length cDNA sequences reveal changes in evolutionary pressures on a post-tetraploidization genome.</title>
        <authorList>
            <person name="Leong J.S."/>
            <person name="Jantzen S.G."/>
            <person name="von Schalburg K.R."/>
            <person name="Cooper G.A."/>
            <person name="Messmer A.M."/>
            <person name="Liao N.Y."/>
            <person name="Munro S."/>
            <person name="Moore R."/>
            <person name="Holt R.A."/>
            <person name="Jones S.J."/>
            <person name="Davidson W.S."/>
            <person name="Koop B.F."/>
        </authorList>
    </citation>
    <scope>NUCLEOTIDE SEQUENCE [LARGE SCALE MRNA]</scope>
    <source>
        <tissue>Brain</tissue>
    </source>
</reference>
<feature type="chain" id="PRO_0000379021" description="AKT-interacting protein">
    <location>
        <begin position="1"/>
        <end position="297"/>
    </location>
</feature>
<feature type="domain" description="UBC core" evidence="2">
    <location>
        <begin position="79"/>
        <end position="227"/>
    </location>
</feature>
<feature type="region of interest" description="Disordered" evidence="3">
    <location>
        <begin position="1"/>
        <end position="45"/>
    </location>
</feature>
<feature type="region of interest" description="Disordered" evidence="3">
    <location>
        <begin position="262"/>
        <end position="297"/>
    </location>
</feature>
<feature type="compositionally biased region" description="Polar residues" evidence="3">
    <location>
        <begin position="1"/>
        <end position="13"/>
    </location>
</feature>
<feature type="compositionally biased region" description="Low complexity" evidence="3">
    <location>
        <begin position="25"/>
        <end position="39"/>
    </location>
</feature>
<organism>
    <name type="scientific">Salmo salar</name>
    <name type="common">Atlantic salmon</name>
    <dbReference type="NCBI Taxonomy" id="8030"/>
    <lineage>
        <taxon>Eukaryota</taxon>
        <taxon>Metazoa</taxon>
        <taxon>Chordata</taxon>
        <taxon>Craniata</taxon>
        <taxon>Vertebrata</taxon>
        <taxon>Euteleostomi</taxon>
        <taxon>Actinopterygii</taxon>
        <taxon>Neopterygii</taxon>
        <taxon>Teleostei</taxon>
        <taxon>Protacanthopterygii</taxon>
        <taxon>Salmoniformes</taxon>
        <taxon>Salmonidae</taxon>
        <taxon>Salmoninae</taxon>
        <taxon>Salmo</taxon>
    </lineage>
</organism>
<proteinExistence type="evidence at transcript level"/>
<name>AKTIP_SALSA</name>
<dbReference type="EMBL" id="BT044885">
    <property type="protein sequence ID" value="ACI33147.1"/>
    <property type="molecule type" value="mRNA"/>
</dbReference>
<dbReference type="RefSeq" id="NP_001133394.1">
    <property type="nucleotide sequence ID" value="NM_001139922.3"/>
</dbReference>
<dbReference type="RefSeq" id="XP_045544766.1">
    <property type="nucleotide sequence ID" value="XM_045688810.1"/>
</dbReference>
<dbReference type="SMR" id="B5X1G6"/>
<dbReference type="STRING" id="8030.ENSSSAP00000041470"/>
<dbReference type="PaxDb" id="8030-ENSSSAP00000041470"/>
<dbReference type="Ensembl" id="ENSSSAT00070062696">
    <property type="protein sequence ID" value="ENSSSAP00070060097"/>
    <property type="gene ID" value="ENSSSAG00070039026"/>
</dbReference>
<dbReference type="GeneID" id="100194893"/>
<dbReference type="KEGG" id="sasa:100194893"/>
<dbReference type="CTD" id="64400"/>
<dbReference type="Proteomes" id="UP000087266">
    <property type="component" value="Chromosome ssa11"/>
</dbReference>
<dbReference type="Bgee" id="ENSSSAG00000044860">
    <property type="expression patterns" value="Expressed in ovary and 26 other cell types or tissues"/>
</dbReference>
<dbReference type="GO" id="GO:0070695">
    <property type="term" value="C:FHF complex"/>
    <property type="evidence" value="ECO:0000250"/>
    <property type="project" value="UniProtKB"/>
</dbReference>
<dbReference type="GO" id="GO:0005886">
    <property type="term" value="C:plasma membrane"/>
    <property type="evidence" value="ECO:0007669"/>
    <property type="project" value="UniProtKB-SubCell"/>
</dbReference>
<dbReference type="GO" id="GO:0006915">
    <property type="term" value="P:apoptotic process"/>
    <property type="evidence" value="ECO:0007669"/>
    <property type="project" value="UniProtKB-KW"/>
</dbReference>
<dbReference type="GO" id="GO:0045022">
    <property type="term" value="P:early endosome to late endosome transport"/>
    <property type="evidence" value="ECO:0000250"/>
    <property type="project" value="UniProtKB"/>
</dbReference>
<dbReference type="GO" id="GO:0007032">
    <property type="term" value="P:endosome organization"/>
    <property type="evidence" value="ECO:0000250"/>
    <property type="project" value="UniProtKB"/>
</dbReference>
<dbReference type="GO" id="GO:0008333">
    <property type="term" value="P:endosome to lysosome transport"/>
    <property type="evidence" value="ECO:0000250"/>
    <property type="project" value="UniProtKB"/>
</dbReference>
<dbReference type="GO" id="GO:0007040">
    <property type="term" value="P:lysosome organization"/>
    <property type="evidence" value="ECO:0000250"/>
    <property type="project" value="UniProtKB"/>
</dbReference>
<dbReference type="GO" id="GO:0015031">
    <property type="term" value="P:protein transport"/>
    <property type="evidence" value="ECO:0007669"/>
    <property type="project" value="UniProtKB-KW"/>
</dbReference>
<dbReference type="CDD" id="cd23814">
    <property type="entry name" value="UEV_AKTIP"/>
    <property type="match status" value="1"/>
</dbReference>
<dbReference type="FunFam" id="3.10.110.10:FF:000030">
    <property type="entry name" value="AKT-interacting protein-like isoform X2"/>
    <property type="match status" value="1"/>
</dbReference>
<dbReference type="Gene3D" id="3.10.110.10">
    <property type="entry name" value="Ubiquitin Conjugating Enzyme"/>
    <property type="match status" value="1"/>
</dbReference>
<dbReference type="InterPro" id="IPR050113">
    <property type="entry name" value="Ub_conjugating_enzyme"/>
</dbReference>
<dbReference type="InterPro" id="IPR000608">
    <property type="entry name" value="UBQ-conjugat_E2_core"/>
</dbReference>
<dbReference type="InterPro" id="IPR016135">
    <property type="entry name" value="UBQ-conjugating_enzyme/RWD"/>
</dbReference>
<dbReference type="PANTHER" id="PTHR24067">
    <property type="entry name" value="UBIQUITIN-CONJUGATING ENZYME E2"/>
    <property type="match status" value="1"/>
</dbReference>
<dbReference type="Pfam" id="PF00179">
    <property type="entry name" value="UQ_con"/>
    <property type="match status" value="1"/>
</dbReference>
<dbReference type="SMART" id="SM00212">
    <property type="entry name" value="UBCc"/>
    <property type="match status" value="1"/>
</dbReference>
<dbReference type="SUPFAM" id="SSF54495">
    <property type="entry name" value="UBC-like"/>
    <property type="match status" value="1"/>
</dbReference>
<dbReference type="PROSITE" id="PS50127">
    <property type="entry name" value="UBC_2"/>
    <property type="match status" value="1"/>
</dbReference>
<protein>
    <recommendedName>
        <fullName>AKT-interacting protein</fullName>
    </recommendedName>
    <alternativeName>
        <fullName>Fused toes protein homolog</fullName>
    </alternativeName>
</protein>
<comment type="function">
    <text evidence="1">May function to promote vesicle trafficking and/or fusion. May also regulate apoptosis (By similarity).</text>
</comment>
<comment type="subcellular location">
    <subcellularLocation>
        <location evidence="1">Cytoplasm</location>
    </subcellularLocation>
    <subcellularLocation>
        <location evidence="1">Cell membrane</location>
        <topology evidence="1">Peripheral membrane protein</topology>
    </subcellularLocation>
</comment>
<comment type="similarity">
    <text evidence="2">Belongs to the ubiquitin-conjugating enzyme family. FTS subfamily.</text>
</comment>
<comment type="caution">
    <text evidence="4">Lacks the conserved Cys residue necessary for ubiquitin-conjugating enzyme E2 activity.</text>
</comment>